<gene>
    <name evidence="1" type="primary">def</name>
    <name type="ordered locus">BUAP5A_489</name>
</gene>
<keyword id="KW-0378">Hydrolase</keyword>
<keyword id="KW-0408">Iron</keyword>
<keyword id="KW-0479">Metal-binding</keyword>
<keyword id="KW-0648">Protein biosynthesis</keyword>
<reference key="1">
    <citation type="journal article" date="2009" name="Science">
        <title>The dynamics and time scale of ongoing genomic erosion in symbiotic bacteria.</title>
        <authorList>
            <person name="Moran N.A."/>
            <person name="McLaughlin H.J."/>
            <person name="Sorek R."/>
        </authorList>
    </citation>
    <scope>NUCLEOTIDE SEQUENCE [LARGE SCALE GENOMIC DNA]</scope>
    <source>
        <strain>5A</strain>
    </source>
</reference>
<sequence length="173" mass="20038">MSLLKILYYPDIRLRILAKPVKEINKKIQKIANDMIDTMYQEEGIGLAATQVNIPLQIIVVNTMEQKKNNLVLINPKIIKKEGDISIEEGCLSIPEYQASIPRSNYIQVQAVNLDGEKIEIEAKSILSICIQHEIDHLKGKLFIDYLSKFKRERIQKKFEKINKKNKKFSIKE</sequence>
<organism>
    <name type="scientific">Buchnera aphidicola subsp. Acyrthosiphon pisum (strain 5A)</name>
    <dbReference type="NCBI Taxonomy" id="563178"/>
    <lineage>
        <taxon>Bacteria</taxon>
        <taxon>Pseudomonadati</taxon>
        <taxon>Pseudomonadota</taxon>
        <taxon>Gammaproteobacteria</taxon>
        <taxon>Enterobacterales</taxon>
        <taxon>Erwiniaceae</taxon>
        <taxon>Buchnera</taxon>
    </lineage>
</organism>
<dbReference type="EC" id="3.5.1.88" evidence="1"/>
<dbReference type="EMBL" id="CP001161">
    <property type="protein sequence ID" value="ACL30840.1"/>
    <property type="molecule type" value="Genomic_DNA"/>
</dbReference>
<dbReference type="RefSeq" id="WP_009874447.1">
    <property type="nucleotide sequence ID" value="NC_011833.1"/>
</dbReference>
<dbReference type="SMR" id="B8D9R9"/>
<dbReference type="KEGG" id="bap:BUAP5A_489"/>
<dbReference type="HOGENOM" id="CLU_061901_2_1_6"/>
<dbReference type="OrthoDB" id="9804313at2"/>
<dbReference type="Proteomes" id="UP000006904">
    <property type="component" value="Chromosome"/>
</dbReference>
<dbReference type="GO" id="GO:0046872">
    <property type="term" value="F:metal ion binding"/>
    <property type="evidence" value="ECO:0007669"/>
    <property type="project" value="UniProtKB-KW"/>
</dbReference>
<dbReference type="GO" id="GO:0042586">
    <property type="term" value="F:peptide deformylase activity"/>
    <property type="evidence" value="ECO:0007669"/>
    <property type="project" value="UniProtKB-UniRule"/>
</dbReference>
<dbReference type="GO" id="GO:0043686">
    <property type="term" value="P:co-translational protein modification"/>
    <property type="evidence" value="ECO:0007669"/>
    <property type="project" value="TreeGrafter"/>
</dbReference>
<dbReference type="GO" id="GO:0006412">
    <property type="term" value="P:translation"/>
    <property type="evidence" value="ECO:0007669"/>
    <property type="project" value="UniProtKB-UniRule"/>
</dbReference>
<dbReference type="CDD" id="cd00487">
    <property type="entry name" value="Pep_deformylase"/>
    <property type="match status" value="1"/>
</dbReference>
<dbReference type="FunFam" id="3.90.45.10:FF:000001">
    <property type="entry name" value="Peptide deformylase"/>
    <property type="match status" value="1"/>
</dbReference>
<dbReference type="Gene3D" id="3.90.45.10">
    <property type="entry name" value="Peptide deformylase"/>
    <property type="match status" value="1"/>
</dbReference>
<dbReference type="HAMAP" id="MF_00163">
    <property type="entry name" value="Pep_deformylase"/>
    <property type="match status" value="1"/>
</dbReference>
<dbReference type="InterPro" id="IPR023635">
    <property type="entry name" value="Peptide_deformylase"/>
</dbReference>
<dbReference type="InterPro" id="IPR036821">
    <property type="entry name" value="Peptide_deformylase_sf"/>
</dbReference>
<dbReference type="NCBIfam" id="TIGR00079">
    <property type="entry name" value="pept_deformyl"/>
    <property type="match status" value="1"/>
</dbReference>
<dbReference type="NCBIfam" id="NF001159">
    <property type="entry name" value="PRK00150.1-3"/>
    <property type="match status" value="1"/>
</dbReference>
<dbReference type="PANTHER" id="PTHR10458">
    <property type="entry name" value="PEPTIDE DEFORMYLASE"/>
    <property type="match status" value="1"/>
</dbReference>
<dbReference type="PANTHER" id="PTHR10458:SF22">
    <property type="entry name" value="PEPTIDE DEFORMYLASE"/>
    <property type="match status" value="1"/>
</dbReference>
<dbReference type="Pfam" id="PF01327">
    <property type="entry name" value="Pep_deformylase"/>
    <property type="match status" value="1"/>
</dbReference>
<dbReference type="PIRSF" id="PIRSF004749">
    <property type="entry name" value="Pep_def"/>
    <property type="match status" value="1"/>
</dbReference>
<dbReference type="PRINTS" id="PR01576">
    <property type="entry name" value="PDEFORMYLASE"/>
</dbReference>
<dbReference type="SUPFAM" id="SSF56420">
    <property type="entry name" value="Peptide deformylase"/>
    <property type="match status" value="1"/>
</dbReference>
<proteinExistence type="inferred from homology"/>
<feature type="chain" id="PRO_1000200717" description="Peptide deformylase">
    <location>
        <begin position="1"/>
        <end position="173"/>
    </location>
</feature>
<feature type="active site" evidence="1">
    <location>
        <position position="134"/>
    </location>
</feature>
<feature type="binding site" evidence="1">
    <location>
        <position position="91"/>
    </location>
    <ligand>
        <name>Fe cation</name>
        <dbReference type="ChEBI" id="CHEBI:24875"/>
    </ligand>
</feature>
<feature type="binding site" evidence="1">
    <location>
        <position position="133"/>
    </location>
    <ligand>
        <name>Fe cation</name>
        <dbReference type="ChEBI" id="CHEBI:24875"/>
    </ligand>
</feature>
<feature type="binding site" evidence="1">
    <location>
        <position position="137"/>
    </location>
    <ligand>
        <name>Fe cation</name>
        <dbReference type="ChEBI" id="CHEBI:24875"/>
    </ligand>
</feature>
<name>DEF_BUCA5</name>
<comment type="function">
    <text evidence="1">Removes the formyl group from the N-terminal Met of newly synthesized proteins. Requires at least a dipeptide for an efficient rate of reaction. N-terminal L-methionine is a prerequisite for activity but the enzyme has broad specificity at other positions.</text>
</comment>
<comment type="catalytic activity">
    <reaction evidence="1">
        <text>N-terminal N-formyl-L-methionyl-[peptide] + H2O = N-terminal L-methionyl-[peptide] + formate</text>
        <dbReference type="Rhea" id="RHEA:24420"/>
        <dbReference type="Rhea" id="RHEA-COMP:10639"/>
        <dbReference type="Rhea" id="RHEA-COMP:10640"/>
        <dbReference type="ChEBI" id="CHEBI:15377"/>
        <dbReference type="ChEBI" id="CHEBI:15740"/>
        <dbReference type="ChEBI" id="CHEBI:49298"/>
        <dbReference type="ChEBI" id="CHEBI:64731"/>
        <dbReference type="EC" id="3.5.1.88"/>
    </reaction>
</comment>
<comment type="cofactor">
    <cofactor evidence="1">
        <name>Fe(2+)</name>
        <dbReference type="ChEBI" id="CHEBI:29033"/>
    </cofactor>
    <text evidence="1">Binds 1 Fe(2+) ion.</text>
</comment>
<comment type="similarity">
    <text evidence="1">Belongs to the polypeptide deformylase family.</text>
</comment>
<protein>
    <recommendedName>
        <fullName evidence="1">Peptide deformylase</fullName>
        <shortName evidence="1">PDF</shortName>
        <ecNumber evidence="1">3.5.1.88</ecNumber>
    </recommendedName>
    <alternativeName>
        <fullName evidence="1">Polypeptide deformylase</fullName>
    </alternativeName>
</protein>
<evidence type="ECO:0000255" key="1">
    <source>
        <dbReference type="HAMAP-Rule" id="MF_00163"/>
    </source>
</evidence>
<accession>B8D9R9</accession>